<evidence type="ECO:0000255" key="1">
    <source>
        <dbReference type="HAMAP-Rule" id="MF_01601"/>
    </source>
</evidence>
<name>HLDD_ECO24</name>
<protein>
    <recommendedName>
        <fullName evidence="1">ADP-L-glycero-D-manno-heptose-6-epimerase</fullName>
        <ecNumber evidence="1">5.1.3.20</ecNumber>
    </recommendedName>
    <alternativeName>
        <fullName evidence="1">ADP-L-glycero-beta-D-manno-heptose-6-epimerase</fullName>
        <shortName evidence="1">ADP-glyceromanno-heptose 6-epimerase</shortName>
        <shortName evidence="1">ADP-hep 6-epimerase</shortName>
        <shortName evidence="1">AGME</shortName>
    </alternativeName>
</protein>
<gene>
    <name evidence="1" type="primary">hldD</name>
    <name type="ordered locus">EcE24377A_4122</name>
</gene>
<accession>A7ZTH2</accession>
<dbReference type="EC" id="5.1.3.20" evidence="1"/>
<dbReference type="EMBL" id="CP000800">
    <property type="protein sequence ID" value="ABV18540.1"/>
    <property type="molecule type" value="Genomic_DNA"/>
</dbReference>
<dbReference type="SMR" id="A7ZTH2"/>
<dbReference type="KEGG" id="ecw:EcE24377A_4122"/>
<dbReference type="HOGENOM" id="CLU_007383_1_3_6"/>
<dbReference type="UniPathway" id="UPA00356">
    <property type="reaction ID" value="UER00440"/>
</dbReference>
<dbReference type="Proteomes" id="UP000001122">
    <property type="component" value="Chromosome"/>
</dbReference>
<dbReference type="GO" id="GO:0008712">
    <property type="term" value="F:ADP-glyceromanno-heptose 6-epimerase activity"/>
    <property type="evidence" value="ECO:0007669"/>
    <property type="project" value="UniProtKB-UniRule"/>
</dbReference>
<dbReference type="GO" id="GO:0050661">
    <property type="term" value="F:NADP binding"/>
    <property type="evidence" value="ECO:0007669"/>
    <property type="project" value="InterPro"/>
</dbReference>
<dbReference type="GO" id="GO:0097171">
    <property type="term" value="P:ADP-L-glycero-beta-D-manno-heptose biosynthetic process"/>
    <property type="evidence" value="ECO:0007669"/>
    <property type="project" value="UniProtKB-UniPathway"/>
</dbReference>
<dbReference type="GO" id="GO:0005975">
    <property type="term" value="P:carbohydrate metabolic process"/>
    <property type="evidence" value="ECO:0007669"/>
    <property type="project" value="UniProtKB-UniRule"/>
</dbReference>
<dbReference type="CDD" id="cd05248">
    <property type="entry name" value="ADP_GME_SDR_e"/>
    <property type="match status" value="1"/>
</dbReference>
<dbReference type="Gene3D" id="3.40.50.720">
    <property type="entry name" value="NAD(P)-binding Rossmann-like Domain"/>
    <property type="match status" value="1"/>
</dbReference>
<dbReference type="Gene3D" id="3.90.25.10">
    <property type="entry name" value="UDP-galactose 4-epimerase, domain 1"/>
    <property type="match status" value="1"/>
</dbReference>
<dbReference type="HAMAP" id="MF_01601">
    <property type="entry name" value="Heptose_epimerase"/>
    <property type="match status" value="1"/>
</dbReference>
<dbReference type="InterPro" id="IPR001509">
    <property type="entry name" value="Epimerase_deHydtase"/>
</dbReference>
<dbReference type="InterPro" id="IPR011912">
    <property type="entry name" value="Heptose_epim"/>
</dbReference>
<dbReference type="InterPro" id="IPR036291">
    <property type="entry name" value="NAD(P)-bd_dom_sf"/>
</dbReference>
<dbReference type="NCBIfam" id="TIGR02197">
    <property type="entry name" value="heptose_epim"/>
    <property type="match status" value="1"/>
</dbReference>
<dbReference type="NCBIfam" id="NF008360">
    <property type="entry name" value="PRK11150.1"/>
    <property type="match status" value="1"/>
</dbReference>
<dbReference type="PANTHER" id="PTHR43103:SF3">
    <property type="entry name" value="ADP-L-GLYCERO-D-MANNO-HEPTOSE-6-EPIMERASE"/>
    <property type="match status" value="1"/>
</dbReference>
<dbReference type="PANTHER" id="PTHR43103">
    <property type="entry name" value="NUCLEOSIDE-DIPHOSPHATE-SUGAR EPIMERASE"/>
    <property type="match status" value="1"/>
</dbReference>
<dbReference type="Pfam" id="PF01370">
    <property type="entry name" value="Epimerase"/>
    <property type="match status" value="1"/>
</dbReference>
<dbReference type="SUPFAM" id="SSF51735">
    <property type="entry name" value="NAD(P)-binding Rossmann-fold domains"/>
    <property type="match status" value="1"/>
</dbReference>
<feature type="chain" id="PRO_1000069353" description="ADP-L-glycero-D-manno-heptose-6-epimerase">
    <location>
        <begin position="1"/>
        <end position="310"/>
    </location>
</feature>
<feature type="active site" description="Proton acceptor" evidence="1">
    <location>
        <position position="140"/>
    </location>
</feature>
<feature type="active site" description="Proton acceptor" evidence="1">
    <location>
        <position position="178"/>
    </location>
</feature>
<feature type="binding site" evidence="1">
    <location>
        <begin position="10"/>
        <end position="11"/>
    </location>
    <ligand>
        <name>NADP(+)</name>
        <dbReference type="ChEBI" id="CHEBI:58349"/>
    </ligand>
</feature>
<feature type="binding site" evidence="1">
    <location>
        <begin position="31"/>
        <end position="32"/>
    </location>
    <ligand>
        <name>NADP(+)</name>
        <dbReference type="ChEBI" id="CHEBI:58349"/>
    </ligand>
</feature>
<feature type="binding site" evidence="1">
    <location>
        <position position="38"/>
    </location>
    <ligand>
        <name>NADP(+)</name>
        <dbReference type="ChEBI" id="CHEBI:58349"/>
    </ligand>
</feature>
<feature type="binding site" evidence="1">
    <location>
        <position position="53"/>
    </location>
    <ligand>
        <name>NADP(+)</name>
        <dbReference type="ChEBI" id="CHEBI:58349"/>
    </ligand>
</feature>
<feature type="binding site" evidence="1">
    <location>
        <begin position="75"/>
        <end position="79"/>
    </location>
    <ligand>
        <name>NADP(+)</name>
        <dbReference type="ChEBI" id="CHEBI:58349"/>
    </ligand>
</feature>
<feature type="binding site" evidence="1">
    <location>
        <position position="92"/>
    </location>
    <ligand>
        <name>NADP(+)</name>
        <dbReference type="ChEBI" id="CHEBI:58349"/>
    </ligand>
</feature>
<feature type="binding site" evidence="1">
    <location>
        <position position="144"/>
    </location>
    <ligand>
        <name>NADP(+)</name>
        <dbReference type="ChEBI" id="CHEBI:58349"/>
    </ligand>
</feature>
<feature type="binding site" evidence="1">
    <location>
        <position position="169"/>
    </location>
    <ligand>
        <name>substrate</name>
    </ligand>
</feature>
<feature type="binding site" evidence="1">
    <location>
        <position position="170"/>
    </location>
    <ligand>
        <name>NADP(+)</name>
        <dbReference type="ChEBI" id="CHEBI:58349"/>
    </ligand>
</feature>
<feature type="binding site" evidence="1">
    <location>
        <position position="178"/>
    </location>
    <ligand>
        <name>NADP(+)</name>
        <dbReference type="ChEBI" id="CHEBI:58349"/>
    </ligand>
</feature>
<feature type="binding site" evidence="1">
    <location>
        <position position="180"/>
    </location>
    <ligand>
        <name>substrate</name>
    </ligand>
</feature>
<feature type="binding site" evidence="1">
    <location>
        <position position="187"/>
    </location>
    <ligand>
        <name>substrate</name>
    </ligand>
</feature>
<feature type="binding site" evidence="1">
    <location>
        <begin position="201"/>
        <end position="204"/>
    </location>
    <ligand>
        <name>substrate</name>
    </ligand>
</feature>
<feature type="binding site" evidence="1">
    <location>
        <position position="209"/>
    </location>
    <ligand>
        <name>substrate</name>
    </ligand>
</feature>
<feature type="binding site" evidence="1">
    <location>
        <position position="272"/>
    </location>
    <ligand>
        <name>substrate</name>
    </ligand>
</feature>
<feature type="modified residue" description="N6-acetyllysine" evidence="1">
    <location>
        <position position="267"/>
    </location>
</feature>
<comment type="function">
    <text evidence="1">Catalyzes the interconversion between ADP-D-glycero-beta-D-manno-heptose and ADP-L-glycero-beta-D-manno-heptose via an epimerization at carbon 6 of the heptose.</text>
</comment>
<comment type="catalytic activity">
    <reaction evidence="1">
        <text>ADP-D-glycero-beta-D-manno-heptose = ADP-L-glycero-beta-D-manno-heptose</text>
        <dbReference type="Rhea" id="RHEA:17577"/>
        <dbReference type="ChEBI" id="CHEBI:59967"/>
        <dbReference type="ChEBI" id="CHEBI:61506"/>
        <dbReference type="EC" id="5.1.3.20"/>
    </reaction>
</comment>
<comment type="cofactor">
    <cofactor evidence="1">
        <name>NADP(+)</name>
        <dbReference type="ChEBI" id="CHEBI:58349"/>
    </cofactor>
    <text evidence="1">Binds 1 NADP(+) per subunit.</text>
</comment>
<comment type="pathway">
    <text evidence="1">Nucleotide-sugar biosynthesis; ADP-L-glycero-beta-D-manno-heptose biosynthesis; ADP-L-glycero-beta-D-manno-heptose from D-glycero-beta-D-manno-heptose 7-phosphate: step 4/4.</text>
</comment>
<comment type="subunit">
    <text evidence="1">Homopentamer.</text>
</comment>
<comment type="domain">
    <text evidence="1">Contains a large N-terminal NADP-binding domain, and a smaller C-terminal substrate-binding domain.</text>
</comment>
<comment type="similarity">
    <text evidence="1">Belongs to the NAD(P)-dependent epimerase/dehydratase family. HldD subfamily.</text>
</comment>
<sequence>MIIVTGGAGFIGSNIVKALNDKGITDILVVDNLKDGTKFVNLVDLNIADYMDKEDFLIQIMAGEEFGDVEAIFHEGACSSTTEWDGKYMMDNNYQYSKELLHYCLEREIPFLYASSAATYGGRTSDFIESREYEKPLNVYGYSKFLFDEYVRQILPEANSQIVGFRYFNVYGPREGHKGSMASVAFHLNTQLNNGESPKLFEGSENFKRDFVYVGDVADVNLWFLENGVSGIFNLGTGRAESFQAVADATLAYHKKGQIEYIPFPDKLKGRYQAFTQADLTNLRAAGYDKPFKTVAEGVTEYMAWLNRDA</sequence>
<reference key="1">
    <citation type="journal article" date="2008" name="J. Bacteriol.">
        <title>The pangenome structure of Escherichia coli: comparative genomic analysis of E. coli commensal and pathogenic isolates.</title>
        <authorList>
            <person name="Rasko D.A."/>
            <person name="Rosovitz M.J."/>
            <person name="Myers G.S.A."/>
            <person name="Mongodin E.F."/>
            <person name="Fricke W.F."/>
            <person name="Gajer P."/>
            <person name="Crabtree J."/>
            <person name="Sebaihia M."/>
            <person name="Thomson N.R."/>
            <person name="Chaudhuri R."/>
            <person name="Henderson I.R."/>
            <person name="Sperandio V."/>
            <person name="Ravel J."/>
        </authorList>
    </citation>
    <scope>NUCLEOTIDE SEQUENCE [LARGE SCALE GENOMIC DNA]</scope>
    <source>
        <strain>E24377A / ETEC</strain>
    </source>
</reference>
<keyword id="KW-0007">Acetylation</keyword>
<keyword id="KW-0119">Carbohydrate metabolism</keyword>
<keyword id="KW-0413">Isomerase</keyword>
<keyword id="KW-0521">NADP</keyword>
<keyword id="KW-1185">Reference proteome</keyword>
<proteinExistence type="inferred from homology"/>
<organism>
    <name type="scientific">Escherichia coli O139:H28 (strain E24377A / ETEC)</name>
    <dbReference type="NCBI Taxonomy" id="331111"/>
    <lineage>
        <taxon>Bacteria</taxon>
        <taxon>Pseudomonadati</taxon>
        <taxon>Pseudomonadota</taxon>
        <taxon>Gammaproteobacteria</taxon>
        <taxon>Enterobacterales</taxon>
        <taxon>Enterobacteriaceae</taxon>
        <taxon>Escherichia</taxon>
    </lineage>
</organism>